<accession>Q975U2</accession>
<accession>F9VMU3</accession>
<comment type="function">
    <text evidence="1">ATPase which is responsible for recognizing, binding, unfolding and translocation of substrate proteins into the archaeal 20S proteasome core particle. Is essential for opening the gate of the 20S proteasome via an interaction with its C-terminus, thereby allowing substrate entry and access to the site of proteolysis. Thus, the C-termini of the proteasomal ATPase function like a 'key in a lock' to induce gate opening and therefore regulate proteolysis. Unfolding activity requires energy from ATP hydrolysis, whereas ATP binding alone promotes ATPase-20S proteasome association which triggers gate opening, and supports translocation of unfolded substrates.</text>
</comment>
<comment type="subunit">
    <text evidence="1">Homohexamer. The hexameric complex has a two-ring architecture resembling a top hat that caps the 20S proteasome core at one or both ends. Upon ATP-binding, the C-terminus of PAN interacts with the alpha-rings of the proteasome core by binding to the intersubunit pockets.</text>
</comment>
<comment type="subcellular location">
    <subcellularLocation>
        <location evidence="1">Cytoplasm</location>
    </subcellularLocation>
</comment>
<comment type="domain">
    <text evidence="1">Consists of three main regions, an N-terminal coiled-coil domain that may assist in substrate recognition, an interdomain involved in PAN hexamerization, and a C-terminal ATPase domain of the AAA type.</text>
</comment>
<comment type="similarity">
    <text evidence="1">Belongs to the AAA ATPase family.</text>
</comment>
<reference key="1">
    <citation type="journal article" date="2001" name="DNA Res.">
        <title>Complete genome sequence of an aerobic thermoacidophilic Crenarchaeon, Sulfolobus tokodaii strain7.</title>
        <authorList>
            <person name="Kawarabayasi Y."/>
            <person name="Hino Y."/>
            <person name="Horikawa H."/>
            <person name="Jin-no K."/>
            <person name="Takahashi M."/>
            <person name="Sekine M."/>
            <person name="Baba S."/>
            <person name="Ankai A."/>
            <person name="Kosugi H."/>
            <person name="Hosoyama A."/>
            <person name="Fukui S."/>
            <person name="Nagai Y."/>
            <person name="Nishijima K."/>
            <person name="Otsuka R."/>
            <person name="Nakazawa H."/>
            <person name="Takamiya M."/>
            <person name="Kato Y."/>
            <person name="Yoshizawa T."/>
            <person name="Tanaka T."/>
            <person name="Kudoh Y."/>
            <person name="Yamazaki J."/>
            <person name="Kushida N."/>
            <person name="Oguchi A."/>
            <person name="Aoki K."/>
            <person name="Masuda S."/>
            <person name="Yanagii M."/>
            <person name="Nishimura M."/>
            <person name="Yamagishi A."/>
            <person name="Oshima T."/>
            <person name="Kikuchi H."/>
        </authorList>
    </citation>
    <scope>NUCLEOTIDE SEQUENCE [LARGE SCALE GENOMIC DNA]</scope>
    <source>
        <strain>DSM 16993 / JCM 10545 / NBRC 100140 / 7</strain>
    </source>
</reference>
<protein>
    <recommendedName>
        <fullName evidence="1">Proteasome-activating nucleotidase</fullName>
        <shortName evidence="1">PAN</shortName>
    </recommendedName>
    <alternativeName>
        <fullName evidence="1">Proteasomal ATPase</fullName>
    </alternativeName>
    <alternativeName>
        <fullName evidence="1">Proteasome regulatory ATPase</fullName>
    </alternativeName>
    <alternativeName>
        <fullName evidence="1">Proteasome regulatory particle</fullName>
    </alternativeName>
</protein>
<evidence type="ECO:0000255" key="1">
    <source>
        <dbReference type="HAMAP-Rule" id="MF_00553"/>
    </source>
</evidence>
<feature type="chain" id="PRO_0000084753" description="Proteasome-activating nucleotidase">
    <location>
        <begin position="1"/>
        <end position="392"/>
    </location>
</feature>
<feature type="region of interest" description="Docks into pockets in the proteasome alpha-ring to cause gate opening" evidence="1">
    <location>
        <begin position="390"/>
        <end position="392"/>
    </location>
</feature>
<feature type="coiled-coil region" evidence="1">
    <location>
        <begin position="19"/>
        <end position="53"/>
    </location>
</feature>
<feature type="binding site" evidence="1">
    <location>
        <begin position="178"/>
        <end position="183"/>
    </location>
    <ligand>
        <name>ATP</name>
        <dbReference type="ChEBI" id="CHEBI:30616"/>
    </ligand>
</feature>
<feature type="binding site" evidence="1">
    <location>
        <position position="317"/>
    </location>
    <ligand>
        <name>ATP</name>
        <dbReference type="ChEBI" id="CHEBI:30616"/>
    </ligand>
</feature>
<organism>
    <name type="scientific">Sulfurisphaera tokodaii (strain DSM 16993 / JCM 10545 / NBRC 100140 / 7)</name>
    <name type="common">Sulfolobus tokodaii</name>
    <dbReference type="NCBI Taxonomy" id="273063"/>
    <lineage>
        <taxon>Archaea</taxon>
        <taxon>Thermoproteota</taxon>
        <taxon>Thermoprotei</taxon>
        <taxon>Sulfolobales</taxon>
        <taxon>Sulfolobaceae</taxon>
        <taxon>Sulfurisphaera</taxon>
    </lineage>
</organism>
<keyword id="KW-0067">ATP-binding</keyword>
<keyword id="KW-0143">Chaperone</keyword>
<keyword id="KW-0175">Coiled coil</keyword>
<keyword id="KW-0963">Cytoplasm</keyword>
<keyword id="KW-0547">Nucleotide-binding</keyword>
<keyword id="KW-0647">Proteasome</keyword>
<keyword id="KW-1185">Reference proteome</keyword>
<proteinExistence type="inferred from homology"/>
<name>PAN_SULTO</name>
<sequence>MSDELDSYRAKHYNSDDPIVRLLEEKIESLTKELEKLRQDLNWYKGELEKLLAPPYIEAIVLDILPDGKVIVRSSSGPNLIVNVSSNIDIKKLKPGSLVALTQRGSTIVEVLPEREDAYVKSFEVIEKPNVHYSDIGGLNEQINEIREVIELPLKNPELFKEIGIDPPKGVLLYGPPGTGKTLLAKAVATESNATFIQVVASEFAQKFVGEGARIVREVFELARRKAPSIVFIDEIDAIGAKRVDMGTSGEREIQRTLMQLLAEIDGFKPLDNVKIIAATNRLDILDPALLRPGRFDRLIEVPLPNFEGRKEIFRIYLQKMKTDGNIRYDILASMTEGFSGAEIKNVCTEAGYIAIRNGRKYVNMTDLITAIEKIKAKNNKAKNTDRTEKYV</sequence>
<dbReference type="EMBL" id="BA000023">
    <property type="protein sequence ID" value="BAK54240.1"/>
    <property type="molecule type" value="Genomic_DNA"/>
</dbReference>
<dbReference type="RefSeq" id="WP_052846270.1">
    <property type="nucleotide sequence ID" value="NC_003106.2"/>
</dbReference>
<dbReference type="SMR" id="Q975U2"/>
<dbReference type="STRING" id="273063.STK_03300"/>
<dbReference type="GeneID" id="25400198"/>
<dbReference type="KEGG" id="sto:STK_03300"/>
<dbReference type="PATRIC" id="fig|273063.9.peg.386"/>
<dbReference type="eggNOG" id="arCOG01306">
    <property type="taxonomic scope" value="Archaea"/>
</dbReference>
<dbReference type="OrthoDB" id="77269at2157"/>
<dbReference type="Proteomes" id="UP000001015">
    <property type="component" value="Chromosome"/>
</dbReference>
<dbReference type="GO" id="GO:0005737">
    <property type="term" value="C:cytoplasm"/>
    <property type="evidence" value="ECO:0007669"/>
    <property type="project" value="UniProtKB-SubCell"/>
</dbReference>
<dbReference type="GO" id="GO:0022623">
    <property type="term" value="C:proteasome-activating nucleotidase complex"/>
    <property type="evidence" value="ECO:0007669"/>
    <property type="project" value="UniProtKB-UniRule"/>
</dbReference>
<dbReference type="GO" id="GO:0005524">
    <property type="term" value="F:ATP binding"/>
    <property type="evidence" value="ECO:0007669"/>
    <property type="project" value="UniProtKB-UniRule"/>
</dbReference>
<dbReference type="GO" id="GO:0016887">
    <property type="term" value="F:ATP hydrolysis activity"/>
    <property type="evidence" value="ECO:0007669"/>
    <property type="project" value="UniProtKB-UniRule"/>
</dbReference>
<dbReference type="GO" id="GO:0010498">
    <property type="term" value="P:proteasomal protein catabolic process"/>
    <property type="evidence" value="ECO:0007669"/>
    <property type="project" value="UniProtKB-UniRule"/>
</dbReference>
<dbReference type="GO" id="GO:0043335">
    <property type="term" value="P:protein unfolding"/>
    <property type="evidence" value="ECO:0007669"/>
    <property type="project" value="UniProtKB-UniRule"/>
</dbReference>
<dbReference type="CDD" id="cd19502">
    <property type="entry name" value="RecA-like_PAN_like"/>
    <property type="match status" value="1"/>
</dbReference>
<dbReference type="FunFam" id="3.40.50.300:FF:000033">
    <property type="entry name" value="26S protease regulatory subunit 6B"/>
    <property type="match status" value="1"/>
</dbReference>
<dbReference type="Gene3D" id="1.10.8.60">
    <property type="match status" value="1"/>
</dbReference>
<dbReference type="Gene3D" id="2.40.50.140">
    <property type="entry name" value="Nucleic acid-binding proteins"/>
    <property type="match status" value="1"/>
</dbReference>
<dbReference type="Gene3D" id="3.40.50.300">
    <property type="entry name" value="P-loop containing nucleotide triphosphate hydrolases"/>
    <property type="match status" value="1"/>
</dbReference>
<dbReference type="HAMAP" id="MF_00553">
    <property type="entry name" value="PAN"/>
    <property type="match status" value="1"/>
</dbReference>
<dbReference type="InterPro" id="IPR050221">
    <property type="entry name" value="26S_Proteasome_ATPase"/>
</dbReference>
<dbReference type="InterPro" id="IPR003593">
    <property type="entry name" value="AAA+_ATPase"/>
</dbReference>
<dbReference type="InterPro" id="IPR041569">
    <property type="entry name" value="AAA_lid_3"/>
</dbReference>
<dbReference type="InterPro" id="IPR003959">
    <property type="entry name" value="ATPase_AAA_core"/>
</dbReference>
<dbReference type="InterPro" id="IPR003960">
    <property type="entry name" value="ATPase_AAA_CS"/>
</dbReference>
<dbReference type="InterPro" id="IPR012340">
    <property type="entry name" value="NA-bd_OB-fold"/>
</dbReference>
<dbReference type="InterPro" id="IPR023501">
    <property type="entry name" value="Nucleotidase_PAN"/>
</dbReference>
<dbReference type="InterPro" id="IPR027417">
    <property type="entry name" value="P-loop_NTPase"/>
</dbReference>
<dbReference type="InterPro" id="IPR032501">
    <property type="entry name" value="Prot_ATP_ID_OB_2nd"/>
</dbReference>
<dbReference type="NCBIfam" id="NF003069">
    <property type="entry name" value="PRK03992.1"/>
    <property type="match status" value="1"/>
</dbReference>
<dbReference type="NCBIfam" id="TIGR01242">
    <property type="entry name" value="proteasome-activating nucleotidase"/>
    <property type="match status" value="1"/>
</dbReference>
<dbReference type="PANTHER" id="PTHR23073">
    <property type="entry name" value="26S PROTEASOME REGULATORY SUBUNIT"/>
    <property type="match status" value="1"/>
</dbReference>
<dbReference type="Pfam" id="PF00004">
    <property type="entry name" value="AAA"/>
    <property type="match status" value="1"/>
</dbReference>
<dbReference type="Pfam" id="PF17862">
    <property type="entry name" value="AAA_lid_3"/>
    <property type="match status" value="1"/>
</dbReference>
<dbReference type="Pfam" id="PF16450">
    <property type="entry name" value="Prot_ATP_ID_OB_C"/>
    <property type="match status" value="1"/>
</dbReference>
<dbReference type="SMART" id="SM00382">
    <property type="entry name" value="AAA"/>
    <property type="match status" value="1"/>
</dbReference>
<dbReference type="SUPFAM" id="SSF52540">
    <property type="entry name" value="P-loop containing nucleoside triphosphate hydrolases"/>
    <property type="match status" value="1"/>
</dbReference>
<dbReference type="PROSITE" id="PS00674">
    <property type="entry name" value="AAA"/>
    <property type="match status" value="1"/>
</dbReference>
<gene>
    <name evidence="1" type="primary">pan</name>
    <name type="ordered locus">STK_03300</name>
</gene>